<evidence type="ECO:0000250" key="1">
    <source>
        <dbReference type="UniProtKB" id="Q5VZE5"/>
    </source>
</evidence>
<evidence type="ECO:0000256" key="2">
    <source>
        <dbReference type="SAM" id="MobiDB-lite"/>
    </source>
</evidence>
<evidence type="ECO:0000269" key="3">
    <source>
    </source>
</evidence>
<evidence type="ECO:0000269" key="4">
    <source>
    </source>
</evidence>
<evidence type="ECO:0000305" key="5"/>
<reference key="1">
    <citation type="journal article" date="2000" name="Circ. Res.">
        <title>Novel embryonic genes are preferentially expressed by autonomously replicating rat embryonic and neointimal smooth muscle cells.</title>
        <authorList>
            <person name="Weiser-Evans M.C.M."/>
            <person name="Schwartz P.E."/>
            <person name="Grieshaber N.A."/>
            <person name="Quinn B.E."/>
            <person name="Grieshaber S.S."/>
            <person name="Belknap J.K."/>
            <person name="Mourani P.M."/>
            <person name="Majack R.A."/>
            <person name="Stenmark K.R."/>
        </authorList>
    </citation>
    <scope>NUCLEOTIDE SEQUENCE [MRNA]</scope>
    <scope>DEVELOPMENTAL STAGE</scope>
    <scope>INDUCTION</scope>
    <scope>TISSUE SPECIFICITY</scope>
    <scope>FUNCTION IN CELL PROLIFERATION</scope>
</reference>
<reference key="2">
    <citation type="journal article" date="2000" name="Curr. Eye Res.">
        <title>A novel epithelial wound-related gene is abundantly expressed in developing rat cornea and skin.</title>
        <authorList>
            <person name="Yi X.J."/>
            <person name="Li X.F."/>
            <person name="Yu F.S."/>
        </authorList>
    </citation>
    <scope>NUCLEOTIDE SEQUENCE [MRNA]</scope>
</reference>
<reference key="3">
    <citation type="journal article" date="2004" name="Genome Res.">
        <title>The status, quality, and expansion of the NIH full-length cDNA project: the Mammalian Gene Collection (MGC).</title>
        <authorList>
            <consortium name="The MGC Project Team"/>
        </authorList>
    </citation>
    <scope>NUCLEOTIDE SEQUENCE [LARGE SCALE MRNA]</scope>
    <source>
        <tissue>Lung</tissue>
    </source>
</reference>
<reference key="4">
    <citation type="journal article" date="2006" name="Circ. Res.">
        <title>Embryonic growth-associated protein is one subunit of a novel N-terminal acetyltransferase complex essential for embryonic vascular development.</title>
        <authorList>
            <person name="Wenzlau J.M."/>
            <person name="Garl P.J."/>
            <person name="Simpson P."/>
            <person name="Stenmark K.R."/>
            <person name="West J."/>
            <person name="Artinger K.B."/>
            <person name="Nemenoff R.A."/>
            <person name="Weiser-Evans M.C.M."/>
        </authorList>
    </citation>
    <scope>FUNCTION</scope>
</reference>
<organism>
    <name type="scientific">Rattus norvegicus</name>
    <name type="common">Rat</name>
    <dbReference type="NCBI Taxonomy" id="10116"/>
    <lineage>
        <taxon>Eukaryota</taxon>
        <taxon>Metazoa</taxon>
        <taxon>Chordata</taxon>
        <taxon>Craniata</taxon>
        <taxon>Vertebrata</taxon>
        <taxon>Euteleostomi</taxon>
        <taxon>Mammalia</taxon>
        <taxon>Eutheria</taxon>
        <taxon>Euarchontoglires</taxon>
        <taxon>Glires</taxon>
        <taxon>Rodentia</taxon>
        <taxon>Myomorpha</taxon>
        <taxon>Muroidea</taxon>
        <taxon>Muridae</taxon>
        <taxon>Murinae</taxon>
        <taxon>Rattus</taxon>
    </lineage>
</organism>
<gene>
    <name type="primary">Naa35</name>
    <name type="synonym">Egap</name>
    <name type="synonym">Emb8</name>
    <name type="synonym">Mak10</name>
</gene>
<accession>Q6DKG0</accession>
<accession>Q9JI01</accession>
<dbReference type="EMBL" id="AF272892">
    <property type="protein sequence ID" value="AAF81791.1"/>
    <property type="molecule type" value="mRNA"/>
</dbReference>
<dbReference type="EMBL" id="BC074005">
    <property type="protein sequence ID" value="AAH74005.1"/>
    <property type="molecule type" value="mRNA"/>
</dbReference>
<dbReference type="RefSeq" id="NP_579858.2">
    <property type="nucleotide sequence ID" value="NM_133324.2"/>
</dbReference>
<dbReference type="RefSeq" id="XP_006253588.1">
    <property type="nucleotide sequence ID" value="XM_006253526.5"/>
</dbReference>
<dbReference type="SMR" id="Q6DKG0"/>
<dbReference type="FunCoup" id="Q6DKG0">
    <property type="interactions" value="3951"/>
</dbReference>
<dbReference type="STRING" id="10116.ENSRNOP00000025096"/>
<dbReference type="PhosphoSitePlus" id="Q6DKG0"/>
<dbReference type="jPOST" id="Q6DKG0"/>
<dbReference type="PaxDb" id="10116-ENSRNOP00000025096"/>
<dbReference type="GeneID" id="64472"/>
<dbReference type="KEGG" id="rno:64472"/>
<dbReference type="UCSC" id="RGD:621771">
    <property type="organism name" value="rat"/>
</dbReference>
<dbReference type="AGR" id="RGD:621771"/>
<dbReference type="CTD" id="60560"/>
<dbReference type="RGD" id="621771">
    <property type="gene designation" value="Naa35"/>
</dbReference>
<dbReference type="VEuPathDB" id="HostDB:ENSRNOG00000018417"/>
<dbReference type="eggNOG" id="KOG2343">
    <property type="taxonomic scope" value="Eukaryota"/>
</dbReference>
<dbReference type="HOGENOM" id="CLU_011757_1_1_1"/>
<dbReference type="InParanoid" id="Q6DKG0"/>
<dbReference type="PhylomeDB" id="Q6DKG0"/>
<dbReference type="TreeFam" id="TF320627"/>
<dbReference type="PRO" id="PR:Q6DKG0"/>
<dbReference type="Proteomes" id="UP000002494">
    <property type="component" value="Chromosome 17"/>
</dbReference>
<dbReference type="Bgee" id="ENSRNOG00000018417">
    <property type="expression patterns" value="Expressed in skeletal muscle tissue and 20 other cell types or tissues"/>
</dbReference>
<dbReference type="GO" id="GO:0005737">
    <property type="term" value="C:cytoplasm"/>
    <property type="evidence" value="ECO:0000250"/>
    <property type="project" value="UniProtKB"/>
</dbReference>
<dbReference type="GO" id="GO:0031417">
    <property type="term" value="C:NatC complex"/>
    <property type="evidence" value="ECO:0000250"/>
    <property type="project" value="UniProtKB"/>
</dbReference>
<dbReference type="GO" id="GO:0043066">
    <property type="term" value="P:negative regulation of apoptotic process"/>
    <property type="evidence" value="ECO:0000250"/>
    <property type="project" value="UniProtKB"/>
</dbReference>
<dbReference type="GO" id="GO:0048659">
    <property type="term" value="P:smooth muscle cell proliferation"/>
    <property type="evidence" value="ECO:0000250"/>
    <property type="project" value="UniProtKB"/>
</dbReference>
<dbReference type="InterPro" id="IPR007244">
    <property type="entry name" value="Naa35/Mak10"/>
</dbReference>
<dbReference type="PANTHER" id="PTHR21373">
    <property type="entry name" value="GLUCOSE REPRESSIBLE PROTEIN MAK10"/>
    <property type="match status" value="1"/>
</dbReference>
<dbReference type="PANTHER" id="PTHR21373:SF0">
    <property type="entry name" value="N-ALPHA-ACETYLTRANSFERASE 35, NATC AUXILIARY SUBUNIT"/>
    <property type="match status" value="1"/>
</dbReference>
<dbReference type="Pfam" id="PF04112">
    <property type="entry name" value="Mak10"/>
    <property type="match status" value="2"/>
</dbReference>
<keyword id="KW-0963">Cytoplasm</keyword>
<keyword id="KW-1185">Reference proteome</keyword>
<comment type="function">
    <text evidence="1 3 4">Auxillary component of the N-terminal acetyltransferase C (NatC) complex which catalyzes acetylation of N-terminal methionine residues (PubMed:16484612). N-terminal acetylation protects proteins from ubiquitination and degradation by the N-end rule pathway (By similarity). Involved in regulation of apoptosis and proliferation of smooth muscle cells (PubMed:11009567).</text>
</comment>
<comment type="subunit">
    <text evidence="1">Component of the N-terminal acetyltransferase C (NatC) complex, which is composed of NAA35, NAA38 and NAA30.</text>
</comment>
<comment type="subcellular location">
    <subcellularLocation>
        <location evidence="1">Cytoplasm</location>
    </subcellularLocation>
</comment>
<comment type="tissue specificity">
    <text evidence="3">Expressed in primary spermatocytes, basal epidermis, interstitial fibroblasts of skeletal muscle, and intestinal crypts.</text>
</comment>
<comment type="developmental stage">
    <text evidence="3">Widely expressed in the embryo. Expressed in embryonic aorta and pulmonary arteries from 12 dpc to 19 dpc.</text>
</comment>
<comment type="induction">
    <text evidence="3">In carotid arteries, after mechanic injury.</text>
</comment>
<comment type="similarity">
    <text evidence="5">Belongs to the MAK10 family.</text>
</comment>
<sequence length="725" mass="83210">MVMKAAVDDDASGWELNVPEKMEKSSTSWVDITQDFEDACRELKLGELLHDKLFGLFEAMSAIEMMDPKMDAGMIGNQVNRKVLNFEQAVKDGTIKIKDLSLPELIGIMDTCFCCLITWLEGHSLAQTVFTCLYIHNPDFIEDPAMKAFALGILKICDIAREKVNKAAVFEEEDFQSMTYGFKMANGVTDLRVTGMLKDVEDDMQRRVKSTRSRQGEERDPEVELEHQQCLAAFSRVKFTRVLLTVLIAFTKKETSAVAEAQKLMVQAADLLSAIHTSLHHGIQAQNGTTKGDHPIMMGFEPLVNQRLLPPTFPRYAKIIKREEMVNYFSRLIDRIKTVCEVVNLPNLHCILDFFCEFSEQSPCVLSRSLLQTTFLVDNKKVFGTHLMQDMVKDALRSFVSPPVLSPKCCLYNNHQAKDCIDSFVTHCVRPFCSLVQIHGHNRARQRDKLGHILEEFATLQDEAEKVDAALHTMLLKQEPQRQHLACLGTWVLYHSLRIMIQYLLSGFELELYSMHEYYYIYWYLSEFLYAWLMSTLSRADGSQMAEERIMEEQQKGRSSKKTKKKKKVRPLSREITMSQAYQNMCAGMFKTMVAFDMDGKVRKPKFELDSEQVRYEHRFAPFNSVMTPPPVHYLQFKEMSDLSKYSPPPQPPELYVAASKHFQQAKMILESIPNADREVSRILKVAKPNFVVMKLLAGGHKKESKVPPEFDFSVHKYFPVVKLV</sequence>
<proteinExistence type="evidence at protein level"/>
<feature type="chain" id="PRO_0000308618" description="N-alpha-acetyltransferase 35, NatC auxiliary subunit">
    <location>
        <begin position="1"/>
        <end position="725"/>
    </location>
</feature>
<feature type="region of interest" description="Disordered" evidence="2">
    <location>
        <begin position="548"/>
        <end position="573"/>
    </location>
</feature>
<feature type="compositionally biased region" description="Basic residues" evidence="2">
    <location>
        <begin position="558"/>
        <end position="571"/>
    </location>
</feature>
<feature type="sequence conflict" description="In Ref. 2; AAF81791." evidence="5" ref="2">
    <original>V</original>
    <variation>A</variation>
    <location>
        <position position="169"/>
    </location>
</feature>
<feature type="sequence conflict" description="In Ref. 2; AAF81791." evidence="5" ref="2">
    <original>L</original>
    <variation>P</variation>
    <location>
        <position position="396"/>
    </location>
</feature>
<feature type="sequence conflict" description="In Ref. 2; AAF81791." evidence="5" ref="2">
    <original>E</original>
    <variation>D</variation>
    <location>
        <position position="509"/>
    </location>
</feature>
<protein>
    <recommendedName>
        <fullName>N-alpha-acetyltransferase 35, NatC auxiliary subunit</fullName>
    </recommendedName>
    <alternativeName>
        <fullName>Corneal wound-healing-related protein</fullName>
    </alternativeName>
    <alternativeName>
        <fullName>Embryonic growth-associated protein</fullName>
    </alternativeName>
    <alternativeName>
        <fullName>Protein MAK10 homolog</fullName>
    </alternativeName>
</protein>
<name>NAA35_RAT</name>